<comment type="function">
    <text>Probably involved in molybdenum processing.</text>
</comment>
<comment type="similarity">
    <text evidence="1">Belongs to the NifQ family.</text>
</comment>
<proteinExistence type="inferred from homology"/>
<sequence length="167" mass="19665">MPPLDWLRRLWLLYHAGKGSFPLRMGLSPRDWQALRRRLGEVETPLDGETLTRRRLMAELNATREEERQQLGAWLAGWMQQDAGPMAQIIAEVSLAFNHLWQDLGLASRAELRLLMSDCFPQLVVMNEHNMRWKKFFYRQRCLLQQGEVICRSPSCDECWERSACFE</sequence>
<organism>
    <name type="scientific">Klebsiella pneumoniae</name>
    <dbReference type="NCBI Taxonomy" id="573"/>
    <lineage>
        <taxon>Bacteria</taxon>
        <taxon>Pseudomonadati</taxon>
        <taxon>Pseudomonadota</taxon>
        <taxon>Gammaproteobacteria</taxon>
        <taxon>Enterobacterales</taxon>
        <taxon>Enterobacteriaceae</taxon>
        <taxon>Klebsiella/Raoultella group</taxon>
        <taxon>Klebsiella</taxon>
        <taxon>Klebsiella pneumoniae complex</taxon>
    </lineage>
</organism>
<dbReference type="EMBL" id="X13303">
    <property type="protein sequence ID" value="CAA31684.1"/>
    <property type="molecule type" value="Genomic_DNA"/>
</dbReference>
<dbReference type="EMBL" id="M15545">
    <property type="protein sequence ID" value="AAA25108.1"/>
    <property type="molecule type" value="Genomic_DNA"/>
</dbReference>
<dbReference type="PIR" id="S02515">
    <property type="entry name" value="S02515"/>
</dbReference>
<dbReference type="GO" id="GO:0030151">
    <property type="term" value="F:molybdenum ion binding"/>
    <property type="evidence" value="ECO:0007669"/>
    <property type="project" value="InterPro"/>
</dbReference>
<dbReference type="GO" id="GO:0009399">
    <property type="term" value="P:nitrogen fixation"/>
    <property type="evidence" value="ECO:0007669"/>
    <property type="project" value="UniProtKB-KW"/>
</dbReference>
<dbReference type="InterPro" id="IPR006975">
    <property type="entry name" value="NifQ"/>
</dbReference>
<dbReference type="Pfam" id="PF04891">
    <property type="entry name" value="NifQ"/>
    <property type="match status" value="1"/>
</dbReference>
<feature type="chain" id="PRO_0000096822" description="Protein NifQ">
    <location>
        <begin position="1"/>
        <end position="167"/>
    </location>
</feature>
<feature type="sequence conflict" description="In Ref. 2; AAA25108." evidence="1" ref="2">
    <original>DLGLASR</original>
    <variation>ESWSGIA</variation>
    <location>
        <begin position="103"/>
        <end position="109"/>
    </location>
</feature>
<gene>
    <name type="primary">nifQ</name>
</gene>
<evidence type="ECO:0000305" key="1"/>
<protein>
    <recommendedName>
        <fullName>Protein NifQ</fullName>
    </recommendedName>
</protein>
<accession>P10392</accession>
<keyword id="KW-0500">Molybdenum</keyword>
<keyword id="KW-0535">Nitrogen fixation</keyword>
<name>NIFQ_KLEPN</name>
<reference key="1">
    <citation type="journal article" date="1988" name="J. Mol. Biol.">
        <title>Nucleotide sequence of a 24,206-base-pair DNA fragment carrying the entire nitrogen fixation gene cluster of Klebsiella pneumoniae.</title>
        <authorList>
            <person name="Arnold W."/>
            <person name="Rump A."/>
            <person name="Klipp W."/>
            <person name="Priefer U.B."/>
            <person name="Puehler A."/>
        </authorList>
    </citation>
    <scope>NUCLEOTIDE SEQUENCE [GENOMIC DNA]</scope>
</reference>
<reference key="2">
    <citation type="journal article" date="1987" name="J. Bacteriol.">
        <title>Conservation of structure and location of Rhizobium meliloti and Klebsiella pneumoniae nifB genes.</title>
        <authorList>
            <person name="Buikema W.J."/>
            <person name="Klingensmith J.A."/>
            <person name="Gibbons S.L."/>
            <person name="Ausubel F.M."/>
        </authorList>
    </citation>
    <scope>NUCLEOTIDE SEQUENCE [GENOMIC DNA]</scope>
</reference>